<evidence type="ECO:0000255" key="1">
    <source>
        <dbReference type="HAMAP-Rule" id="MF_00048"/>
    </source>
</evidence>
<sequence length="116" mass="13579">MFSWIKGKEGEDKAVEYLRNSGYRILERNFRSRFGEIDIIAEDNGTIVIVEVRSKGSTGYGYPEESIDHKKVRKIIKTAQFYLLKRDIKGKQVRFDIISIVNNNIFHIKNAFDLDY</sequence>
<accession>C0QTY9</accession>
<keyword id="KW-1185">Reference proteome</keyword>
<organism>
    <name type="scientific">Persephonella marina (strain DSM 14350 / EX-H1)</name>
    <dbReference type="NCBI Taxonomy" id="123214"/>
    <lineage>
        <taxon>Bacteria</taxon>
        <taxon>Pseudomonadati</taxon>
        <taxon>Aquificota</taxon>
        <taxon>Aquificia</taxon>
        <taxon>Aquificales</taxon>
        <taxon>Hydrogenothermaceae</taxon>
        <taxon>Persephonella</taxon>
    </lineage>
</organism>
<comment type="similarity">
    <text evidence="1">Belongs to the UPF0102 family.</text>
</comment>
<protein>
    <recommendedName>
        <fullName evidence="1">UPF0102 protein PERMA_0362</fullName>
    </recommendedName>
</protein>
<gene>
    <name type="ordered locus">PERMA_0362</name>
</gene>
<dbReference type="EMBL" id="CP001230">
    <property type="protein sequence ID" value="ACO04655.1"/>
    <property type="molecule type" value="Genomic_DNA"/>
</dbReference>
<dbReference type="RefSeq" id="WP_012676892.1">
    <property type="nucleotide sequence ID" value="NC_012440.1"/>
</dbReference>
<dbReference type="SMR" id="C0QTY9"/>
<dbReference type="STRING" id="123214.PERMA_0362"/>
<dbReference type="PaxDb" id="123214-PERMA_0362"/>
<dbReference type="KEGG" id="pmx:PERMA_0362"/>
<dbReference type="eggNOG" id="COG0792">
    <property type="taxonomic scope" value="Bacteria"/>
</dbReference>
<dbReference type="HOGENOM" id="CLU_115353_3_1_0"/>
<dbReference type="OrthoDB" id="9802516at2"/>
<dbReference type="Proteomes" id="UP000001366">
    <property type="component" value="Chromosome"/>
</dbReference>
<dbReference type="GO" id="GO:0003676">
    <property type="term" value="F:nucleic acid binding"/>
    <property type="evidence" value="ECO:0007669"/>
    <property type="project" value="InterPro"/>
</dbReference>
<dbReference type="CDD" id="cd20736">
    <property type="entry name" value="PoNe_Nuclease"/>
    <property type="match status" value="1"/>
</dbReference>
<dbReference type="Gene3D" id="3.40.1350.10">
    <property type="match status" value="1"/>
</dbReference>
<dbReference type="HAMAP" id="MF_00048">
    <property type="entry name" value="UPF0102"/>
    <property type="match status" value="1"/>
</dbReference>
<dbReference type="InterPro" id="IPR011335">
    <property type="entry name" value="Restrct_endonuc-II-like"/>
</dbReference>
<dbReference type="InterPro" id="IPR011856">
    <property type="entry name" value="tRNA_endonuc-like_dom_sf"/>
</dbReference>
<dbReference type="InterPro" id="IPR003509">
    <property type="entry name" value="UPF0102_YraN-like"/>
</dbReference>
<dbReference type="NCBIfam" id="NF009150">
    <property type="entry name" value="PRK12497.1-3"/>
    <property type="match status" value="1"/>
</dbReference>
<dbReference type="NCBIfam" id="TIGR00252">
    <property type="entry name" value="YraN family protein"/>
    <property type="match status" value="1"/>
</dbReference>
<dbReference type="PANTHER" id="PTHR34039">
    <property type="entry name" value="UPF0102 PROTEIN YRAN"/>
    <property type="match status" value="1"/>
</dbReference>
<dbReference type="PANTHER" id="PTHR34039:SF1">
    <property type="entry name" value="UPF0102 PROTEIN YRAN"/>
    <property type="match status" value="1"/>
</dbReference>
<dbReference type="Pfam" id="PF02021">
    <property type="entry name" value="UPF0102"/>
    <property type="match status" value="1"/>
</dbReference>
<dbReference type="SUPFAM" id="SSF52980">
    <property type="entry name" value="Restriction endonuclease-like"/>
    <property type="match status" value="1"/>
</dbReference>
<feature type="chain" id="PRO_1000200155" description="UPF0102 protein PERMA_0362">
    <location>
        <begin position="1"/>
        <end position="116"/>
    </location>
</feature>
<name>Y362_PERMH</name>
<reference key="1">
    <citation type="journal article" date="2009" name="J. Bacteriol.">
        <title>Complete and draft genome sequences of six members of the Aquificales.</title>
        <authorList>
            <person name="Reysenbach A.-L."/>
            <person name="Hamamura N."/>
            <person name="Podar M."/>
            <person name="Griffiths E."/>
            <person name="Ferreira S."/>
            <person name="Hochstein R."/>
            <person name="Heidelberg J."/>
            <person name="Johnson J."/>
            <person name="Mead D."/>
            <person name="Pohorille A."/>
            <person name="Sarmiento M."/>
            <person name="Schweighofer K."/>
            <person name="Seshadri R."/>
            <person name="Voytek M.A."/>
        </authorList>
    </citation>
    <scope>NUCLEOTIDE SEQUENCE [LARGE SCALE GENOMIC DNA]</scope>
    <source>
        <strain>DSM 14350 / EX-H1</strain>
    </source>
</reference>
<proteinExistence type="inferred from homology"/>